<gene>
    <name type="primary">ALDH</name>
</gene>
<comment type="function">
    <text>Could be indirectly involved in cadmium-detoxification, by lowering the intracellular concentrations of aldehydes.</text>
</comment>
<comment type="catalytic activity">
    <reaction>
        <text>an aldehyde + NAD(+) + H2O = a carboxylate + NADH + 2 H(+)</text>
        <dbReference type="Rhea" id="RHEA:16185"/>
        <dbReference type="ChEBI" id="CHEBI:15377"/>
        <dbReference type="ChEBI" id="CHEBI:15378"/>
        <dbReference type="ChEBI" id="CHEBI:17478"/>
        <dbReference type="ChEBI" id="CHEBI:29067"/>
        <dbReference type="ChEBI" id="CHEBI:57540"/>
        <dbReference type="ChEBI" id="CHEBI:57945"/>
        <dbReference type="EC" id="1.2.1.3"/>
    </reaction>
</comment>
<comment type="pathway">
    <text>Alcohol metabolism; ethanol degradation; acetate from ethanol: step 2/2.</text>
</comment>
<comment type="induction">
    <text>By cadmium.</text>
</comment>
<comment type="similarity">
    <text evidence="3">Belongs to the aldehyde dehydrogenase family.</text>
</comment>
<protein>
    <recommendedName>
        <fullName>Aldehyde dehydrogenase</fullName>
        <ecNumber>1.2.1.3</ecNumber>
    </recommendedName>
    <alternativeName>
        <fullName>Aldehyde dehydrogenase [NAD(+)]</fullName>
    </alternativeName>
</protein>
<feature type="chain" id="PRO_0000056430" description="Aldehyde dehydrogenase">
    <location>
        <begin position="1"/>
        <end position="497"/>
    </location>
</feature>
<feature type="active site" description="Proton acceptor" evidence="2">
    <location>
        <position position="266"/>
    </location>
</feature>
<feature type="active site" description="Nucleophile" evidence="2">
    <location>
        <position position="300"/>
    </location>
</feature>
<feature type="binding site" evidence="1">
    <location>
        <begin position="243"/>
        <end position="248"/>
    </location>
    <ligand>
        <name>NAD(+)</name>
        <dbReference type="ChEBI" id="CHEBI:57540"/>
    </ligand>
</feature>
<feature type="site" description="Transition state stabilizer" evidence="1">
    <location>
        <position position="167"/>
    </location>
</feature>
<name>ALDH_ENCBU</name>
<evidence type="ECO:0000250" key="1"/>
<evidence type="ECO:0000255" key="2">
    <source>
        <dbReference type="PROSITE-ProRule" id="PRU10007"/>
    </source>
</evidence>
<evidence type="ECO:0000305" key="3"/>
<sequence length="497" mass="54159">MSAPKIPEPVKDLKVEFTKIFINNEFVDSVSGKTFATINPSTGEKLAEVQEGDKADIDKAVAAARAAFKRDAEYRKHDASDRGRLLFKLADLIEAHRVQLRTLETLDNGKPFAMSYLGDTLMAQKVLRYYAGFADKIVGQTIPADGNVFCYTRHEPVGVVGAITPWNFPLHLAASKIAPAIAAGCTLVLKPAEQTPLTALYLASLVKQAGFPAGVINIVPGLGHTAGAALTNHPDINKITFTGSTEVGQLIIQGSGKTNLKRVTLELGGKSPNIIFPDSDLDYAVEVSHQAIMANMGQVCCAGSRTFVHEDIYEEFVRRSVERAKKRTVGDPFDPKNENGPQVDETQLKKILELIESGKTEGAKLECGGKRLGDKGYFVEPTVFTDVTSSMRVAKEEIFGPVQLIFKFKDVDEVIERANDTSYGLAAAVFTKNIDTALKVANSLEAGTVWVNTYNHFAFQAPFGGYKMSGQGREFGHYGLEAFLEVKTVYVRTPTKL</sequence>
<dbReference type="EC" id="1.2.1.3"/>
<dbReference type="EMBL" id="X95396">
    <property type="protein sequence ID" value="CAA64680.1"/>
    <property type="molecule type" value="mRNA"/>
</dbReference>
<dbReference type="PIR" id="JC4924">
    <property type="entry name" value="JC4924"/>
</dbReference>
<dbReference type="SMR" id="Q27640"/>
<dbReference type="UniPathway" id="UPA00780">
    <property type="reaction ID" value="UER00768"/>
</dbReference>
<dbReference type="GO" id="GO:0004029">
    <property type="term" value="F:aldehyde dehydrogenase (NAD+) activity"/>
    <property type="evidence" value="ECO:0007669"/>
    <property type="project" value="UniProtKB-EC"/>
</dbReference>
<dbReference type="GO" id="GO:0006068">
    <property type="term" value="P:ethanol catabolic process"/>
    <property type="evidence" value="ECO:0007669"/>
    <property type="project" value="UniProtKB-UniPathway"/>
</dbReference>
<dbReference type="CDD" id="cd07141">
    <property type="entry name" value="ALDH_F1AB_F2_RALDH1"/>
    <property type="match status" value="1"/>
</dbReference>
<dbReference type="FunFam" id="3.40.605.10:FF:000050">
    <property type="entry name" value="Aldehyde dehydrogenase, mitochondrial"/>
    <property type="match status" value="1"/>
</dbReference>
<dbReference type="FunFam" id="3.40.309.10:FF:000001">
    <property type="entry name" value="Mitochondrial aldehyde dehydrogenase 2"/>
    <property type="match status" value="1"/>
</dbReference>
<dbReference type="Gene3D" id="3.40.605.10">
    <property type="entry name" value="Aldehyde Dehydrogenase, Chain A, domain 1"/>
    <property type="match status" value="1"/>
</dbReference>
<dbReference type="Gene3D" id="3.40.309.10">
    <property type="entry name" value="Aldehyde Dehydrogenase, Chain A, domain 2"/>
    <property type="match status" value="1"/>
</dbReference>
<dbReference type="InterPro" id="IPR016161">
    <property type="entry name" value="Ald_DH/histidinol_DH"/>
</dbReference>
<dbReference type="InterPro" id="IPR016163">
    <property type="entry name" value="Ald_DH_C"/>
</dbReference>
<dbReference type="InterPro" id="IPR029510">
    <property type="entry name" value="Ald_DH_CS_GLU"/>
</dbReference>
<dbReference type="InterPro" id="IPR016162">
    <property type="entry name" value="Ald_DH_N"/>
</dbReference>
<dbReference type="InterPro" id="IPR015590">
    <property type="entry name" value="Aldehyde_DH_dom"/>
</dbReference>
<dbReference type="PANTHER" id="PTHR11699">
    <property type="entry name" value="ALDEHYDE DEHYDROGENASE-RELATED"/>
    <property type="match status" value="1"/>
</dbReference>
<dbReference type="Pfam" id="PF00171">
    <property type="entry name" value="Aldedh"/>
    <property type="match status" value="1"/>
</dbReference>
<dbReference type="SUPFAM" id="SSF53720">
    <property type="entry name" value="ALDH-like"/>
    <property type="match status" value="1"/>
</dbReference>
<dbReference type="PROSITE" id="PS00687">
    <property type="entry name" value="ALDEHYDE_DEHYDR_GLU"/>
    <property type="match status" value="1"/>
</dbReference>
<organism>
    <name type="scientific">Enchytraeus buchholzi</name>
    <name type="common">Grindal worm</name>
    <dbReference type="NCBI Taxonomy" id="34589"/>
    <lineage>
        <taxon>Eukaryota</taxon>
        <taxon>Metazoa</taxon>
        <taxon>Spiralia</taxon>
        <taxon>Lophotrochozoa</taxon>
        <taxon>Annelida</taxon>
        <taxon>Clitellata</taxon>
        <taxon>Oligochaeta</taxon>
        <taxon>Enchytraeida</taxon>
        <taxon>Enchytraeidae</taxon>
        <taxon>Enchytraeus</taxon>
    </lineage>
</organism>
<reference key="1">
    <citation type="journal article" date="1996" name="Biochem. Biophys. Res. Commun.">
        <title>Cadmium-detoxification in the earthworm Enchytraeus: specific expression of a putative aldehyde dehydrogenase.</title>
        <authorList>
            <person name="Willuhn J."/>
            <person name="Schmitt-Wrede H.-P."/>
            <person name="Otto A."/>
            <person name="Wunderlich F."/>
        </authorList>
    </citation>
    <scope>NUCLEOTIDE SEQUENCE [MRNA]</scope>
</reference>
<proteinExistence type="evidence at transcript level"/>
<accession>Q27640</accession>
<keyword id="KW-0520">NAD</keyword>
<keyword id="KW-0560">Oxidoreductase</keyword>